<protein>
    <recommendedName>
        <fullName>Membrane-associated tyrosine- and threonine-specific cdc2-inhibitory kinase</fullName>
        <ecNumber evidence="8">2.7.11.1</ecNumber>
    </recommendedName>
    <alternativeName>
        <fullName>Myt1 kinase</fullName>
    </alternativeName>
</protein>
<reference key="1">
    <citation type="journal article" date="1995" name="Science">
        <title>Myt1: a membrane-associated inhibitory kinase that phosphorylates Cdc2 on both threonine-14 and tyrosine-15.</title>
        <authorList>
            <person name="Mueller P.R."/>
            <person name="Coleman T.R."/>
            <person name="Kumagai A."/>
            <person name="Dunphy W.G."/>
        </authorList>
    </citation>
    <scope>NUCLEOTIDE SEQUENCE [MRNA]</scope>
    <scope>FUNCTION</scope>
    <scope>CATALYTIC ACTIVITY</scope>
</reference>
<reference key="2">
    <citation type="submission" date="2003-09" db="EMBL/GenBank/DDBJ databases">
        <authorList>
            <consortium name="NIH - Xenopus Gene Collection (XGC) project"/>
        </authorList>
    </citation>
    <scope>NUCLEOTIDE SEQUENCE [LARGE SCALE MRNA]</scope>
    <source>
        <tissue>Embryo</tissue>
    </source>
</reference>
<reference key="3">
    <citation type="journal article" date="1998" name="EMBO J.">
        <title>A link between MAP kinase and p34(cdc2)/cyclin B during oocyte maturation: p90(rsk) phosphorylates and inactivates the p34(cdc2) inhibitory kinase Myt1.</title>
        <authorList>
            <person name="Palmer A."/>
            <person name="Gavin A.-C."/>
            <person name="Nebreda A.R."/>
        </authorList>
    </citation>
    <scope>PHOSPHORYLATION</scope>
    <scope>ACTIVITY REGULATION</scope>
</reference>
<reference key="4">
    <citation type="journal article" date="2002" name="Development">
        <title>A new role for Mos in Xenopus oocyte maturation: targeting Myt1 independently of MAPK.</title>
        <authorList>
            <person name="Peter M."/>
            <person name="Labbe J.-C."/>
            <person name="Doree M."/>
            <person name="Mandart E."/>
        </authorList>
    </citation>
    <scope>FUNCTION</scope>
    <scope>INTERACTION WITH MOS</scope>
</reference>
<reference key="5">
    <citation type="journal article" date="2005" name="EMBO J.">
        <title>The Polo-like kinase Plx1 interacts with and inhibits Myt1 after fertilization of Xenopus eggs.</title>
        <authorList>
            <person name="Inoue D."/>
            <person name="Sagata N."/>
        </authorList>
    </citation>
    <scope>PHOSPHORYLATION AT THR-478 BY CDK1</scope>
    <scope>PHOSPHORYLATION BY PLK1</scope>
</reference>
<sequence length="548" mass="61785">MPVPGDDMGETPLTRTPIPMPAYFSQAEQSFSLKKRGRSLCYTLPPRPPVKSALPVSRIFPNKQRSWSQPRPQSVSFRSPQNKTPASKLYDQSKGDTFFKQCFKSICKLGRGSFGEVYKVQSLEDGCFYAVKRSVSPFRGESDRQRKLQEVRKHERVGEHPNCLRFVRAWEEKRMLYLQTELCAGSLQQHSEEFAGSLPPRRVWNITCDLLHGLKHLHDRNLLHLDIKPANVFISFSGVCKLGDFGLMVELDGTEGSGEAQEGDPRYMAPELLDGIFSKAADVFSLGMSLLEVACNMELPKGGDGWQQLRQGHLPTEFTSDLPPDFLKVLSAMLEPDYRRRATVDWLLSLPAIRNAERWRMVTLAQERTLGKIIAVYQFIVWLLSFVFQWLNRPVIGFLHYCGLRALPRSPPCSPFPNHLGESSFSSDWDDESLGDDVFEVPPSPLATHRNLTYHGQELIGRHSPDLLSRPSLGSTSTPRNLSPEFSMRKRSALPLTPNVSRISQDSTGKSRSPSTSHSSSGFVDAEVQRTLFLPRNLLGMFDDATEQ</sequence>
<dbReference type="EC" id="2.7.11.1" evidence="8"/>
<dbReference type="EMBL" id="U28931">
    <property type="protein sequence ID" value="AAC59716.1"/>
    <property type="molecule type" value="mRNA"/>
</dbReference>
<dbReference type="EMBL" id="BC057703">
    <property type="protein sequence ID" value="AAH57703.1"/>
    <property type="molecule type" value="mRNA"/>
</dbReference>
<dbReference type="PIR" id="A57247">
    <property type="entry name" value="A57247"/>
</dbReference>
<dbReference type="RefSeq" id="NP_001079935.1">
    <property type="nucleotide sequence ID" value="NM_001086466.1"/>
</dbReference>
<dbReference type="RefSeq" id="XP_018092679.1">
    <property type="nucleotide sequence ID" value="XM_018237190.1"/>
</dbReference>
<dbReference type="RefSeq" id="XP_018092680.1">
    <property type="nucleotide sequence ID" value="XM_018237191.1"/>
</dbReference>
<dbReference type="RefSeq" id="XP_018092681.1">
    <property type="nucleotide sequence ID" value="XM_018237192.1"/>
</dbReference>
<dbReference type="SMR" id="Q91618"/>
<dbReference type="BioGRID" id="97869">
    <property type="interactions" value="1"/>
</dbReference>
<dbReference type="iPTMnet" id="Q91618"/>
<dbReference type="GeneID" id="379626"/>
<dbReference type="KEGG" id="xla:379626"/>
<dbReference type="AGR" id="Xenbase:XB-GENE-969856"/>
<dbReference type="CTD" id="379626"/>
<dbReference type="Xenbase" id="XB-GENE-969856">
    <property type="gene designation" value="pkmyt1.S"/>
</dbReference>
<dbReference type="OMA" id="AQWLLFW"/>
<dbReference type="OrthoDB" id="5337378at2759"/>
<dbReference type="Proteomes" id="UP000186698">
    <property type="component" value="Chromosome 9_10S"/>
</dbReference>
<dbReference type="Bgee" id="379626">
    <property type="expression patterns" value="Expressed in camera-type eye and 19 other cell types or tissues"/>
</dbReference>
<dbReference type="GO" id="GO:0005737">
    <property type="term" value="C:cytoplasm"/>
    <property type="evidence" value="ECO:0000318"/>
    <property type="project" value="GO_Central"/>
</dbReference>
<dbReference type="GO" id="GO:0005789">
    <property type="term" value="C:endoplasmic reticulum membrane"/>
    <property type="evidence" value="ECO:0007669"/>
    <property type="project" value="UniProtKB-SubCell"/>
</dbReference>
<dbReference type="GO" id="GO:0000139">
    <property type="term" value="C:Golgi membrane"/>
    <property type="evidence" value="ECO:0007669"/>
    <property type="project" value="UniProtKB-SubCell"/>
</dbReference>
<dbReference type="GO" id="GO:0005634">
    <property type="term" value="C:nucleus"/>
    <property type="evidence" value="ECO:0000318"/>
    <property type="project" value="GO_Central"/>
</dbReference>
<dbReference type="GO" id="GO:0005524">
    <property type="term" value="F:ATP binding"/>
    <property type="evidence" value="ECO:0007669"/>
    <property type="project" value="UniProtKB-KW"/>
</dbReference>
<dbReference type="GO" id="GO:0046872">
    <property type="term" value="F:metal ion binding"/>
    <property type="evidence" value="ECO:0007669"/>
    <property type="project" value="UniProtKB-KW"/>
</dbReference>
<dbReference type="GO" id="GO:0004672">
    <property type="term" value="F:protein kinase activity"/>
    <property type="evidence" value="ECO:0000318"/>
    <property type="project" value="GO_Central"/>
</dbReference>
<dbReference type="GO" id="GO:0106310">
    <property type="term" value="F:protein serine kinase activity"/>
    <property type="evidence" value="ECO:0007669"/>
    <property type="project" value="RHEA"/>
</dbReference>
<dbReference type="GO" id="GO:0004674">
    <property type="term" value="F:protein serine/threonine kinase activity"/>
    <property type="evidence" value="ECO:0000314"/>
    <property type="project" value="UniProtKB"/>
</dbReference>
<dbReference type="GO" id="GO:0051321">
    <property type="term" value="P:meiotic cell cycle"/>
    <property type="evidence" value="ECO:0000318"/>
    <property type="project" value="GO_Central"/>
</dbReference>
<dbReference type="GO" id="GO:0010972">
    <property type="term" value="P:negative regulation of G2/M transition of mitotic cell cycle"/>
    <property type="evidence" value="ECO:0000314"/>
    <property type="project" value="UniProtKB"/>
</dbReference>
<dbReference type="GO" id="GO:0110031">
    <property type="term" value="P:negative regulation of G2/MI transition of meiotic cell cycle"/>
    <property type="evidence" value="ECO:0000318"/>
    <property type="project" value="GO_Central"/>
</dbReference>
<dbReference type="GO" id="GO:0007088">
    <property type="term" value="P:regulation of mitotic nuclear division"/>
    <property type="evidence" value="ECO:0000314"/>
    <property type="project" value="UniProtKB"/>
</dbReference>
<dbReference type="CDD" id="cd14050">
    <property type="entry name" value="PKc_Myt1"/>
    <property type="match status" value="1"/>
</dbReference>
<dbReference type="FunFam" id="1.10.510.10:FF:000315">
    <property type="entry name" value="membrane-associated tyrosine- and threonine-specific cdc2-inhibitory kinase"/>
    <property type="match status" value="1"/>
</dbReference>
<dbReference type="FunFam" id="3.30.200.20:FF:000280">
    <property type="entry name" value="membrane-associated tyrosine- and threonine-specific cdc2-inhibitory kinase"/>
    <property type="match status" value="1"/>
</dbReference>
<dbReference type="Gene3D" id="3.30.200.20">
    <property type="entry name" value="Phosphorylase Kinase, domain 1"/>
    <property type="match status" value="1"/>
</dbReference>
<dbReference type="Gene3D" id="1.10.510.10">
    <property type="entry name" value="Transferase(Phosphotransferase) domain 1"/>
    <property type="match status" value="1"/>
</dbReference>
<dbReference type="InterPro" id="IPR050339">
    <property type="entry name" value="CC_SR_Kinase"/>
</dbReference>
<dbReference type="InterPro" id="IPR011009">
    <property type="entry name" value="Kinase-like_dom_sf"/>
</dbReference>
<dbReference type="InterPro" id="IPR000719">
    <property type="entry name" value="Prot_kinase_dom"/>
</dbReference>
<dbReference type="InterPro" id="IPR017441">
    <property type="entry name" value="Protein_kinase_ATP_BS"/>
</dbReference>
<dbReference type="InterPro" id="IPR008271">
    <property type="entry name" value="Ser/Thr_kinase_AS"/>
</dbReference>
<dbReference type="InterPro" id="IPR016235">
    <property type="entry name" value="Tyr/Thr_kinase_Cdc2_inhib"/>
</dbReference>
<dbReference type="PANTHER" id="PTHR11042">
    <property type="entry name" value="EUKARYOTIC TRANSLATION INITIATION FACTOR 2-ALPHA KINASE EIF2-ALPHA KINASE -RELATED"/>
    <property type="match status" value="1"/>
</dbReference>
<dbReference type="PANTHER" id="PTHR11042:SF183">
    <property type="entry name" value="MEMBRANE-ASSOCIATED TYROSINE- AND THREONINE-SPECIFIC CDC2-INHIBITORY KINASE"/>
    <property type="match status" value="1"/>
</dbReference>
<dbReference type="Pfam" id="PF00069">
    <property type="entry name" value="Pkinase"/>
    <property type="match status" value="1"/>
</dbReference>
<dbReference type="PIRSF" id="PIRSF000567">
    <property type="entry name" value="TYPK_Myt1"/>
    <property type="match status" value="1"/>
</dbReference>
<dbReference type="SMART" id="SM00220">
    <property type="entry name" value="S_TKc"/>
    <property type="match status" value="1"/>
</dbReference>
<dbReference type="SUPFAM" id="SSF56112">
    <property type="entry name" value="Protein kinase-like (PK-like)"/>
    <property type="match status" value="1"/>
</dbReference>
<dbReference type="PROSITE" id="PS00107">
    <property type="entry name" value="PROTEIN_KINASE_ATP"/>
    <property type="match status" value="1"/>
</dbReference>
<dbReference type="PROSITE" id="PS50011">
    <property type="entry name" value="PROTEIN_KINASE_DOM"/>
    <property type="match status" value="1"/>
</dbReference>
<dbReference type="PROSITE" id="PS00108">
    <property type="entry name" value="PROTEIN_KINASE_ST"/>
    <property type="match status" value="1"/>
</dbReference>
<proteinExistence type="evidence at protein level"/>
<evidence type="ECO:0000250" key="1">
    <source>
        <dbReference type="UniProtKB" id="P30291"/>
    </source>
</evidence>
<evidence type="ECO:0000250" key="2">
    <source>
        <dbReference type="UniProtKB" id="Q99640"/>
    </source>
</evidence>
<evidence type="ECO:0000255" key="3">
    <source>
        <dbReference type="PROSITE-ProRule" id="PRU00159"/>
    </source>
</evidence>
<evidence type="ECO:0000255" key="4">
    <source>
        <dbReference type="PROSITE-ProRule" id="PRU10027"/>
    </source>
</evidence>
<evidence type="ECO:0000256" key="5">
    <source>
        <dbReference type="SAM" id="MobiDB-lite"/>
    </source>
</evidence>
<evidence type="ECO:0000269" key="6">
    <source>
    </source>
</evidence>
<evidence type="ECO:0000269" key="7">
    <source>
    </source>
</evidence>
<evidence type="ECO:0000269" key="8">
    <source>
    </source>
</evidence>
<evidence type="ECO:0000269" key="9">
    <source>
    </source>
</evidence>
<evidence type="ECO:0000305" key="10"/>
<feature type="chain" id="PRO_0000086575" description="Membrane-associated tyrosine- and threonine-specific cdc2-inhibitory kinase">
    <location>
        <begin position="1"/>
        <end position="548"/>
    </location>
</feature>
<feature type="domain" description="Protein kinase" evidence="3">
    <location>
        <begin position="103"/>
        <end position="353"/>
    </location>
</feature>
<feature type="region of interest" description="Disordered" evidence="5">
    <location>
        <begin position="61"/>
        <end position="89"/>
    </location>
</feature>
<feature type="region of interest" description="Disordered" evidence="5">
    <location>
        <begin position="464"/>
        <end position="523"/>
    </location>
</feature>
<feature type="short sequence motif" description="Membrane-association motif" evidence="2">
    <location>
        <begin position="376"/>
        <end position="392"/>
    </location>
</feature>
<feature type="compositionally biased region" description="Polar residues" evidence="5">
    <location>
        <begin position="63"/>
        <end position="85"/>
    </location>
</feature>
<feature type="compositionally biased region" description="Polar residues" evidence="5">
    <location>
        <begin position="472"/>
        <end position="481"/>
    </location>
</feature>
<feature type="compositionally biased region" description="Low complexity" evidence="5">
    <location>
        <begin position="507"/>
        <end position="521"/>
    </location>
</feature>
<feature type="active site" description="Proton acceptor" evidence="3 4">
    <location>
        <position position="226"/>
    </location>
</feature>
<feature type="binding site" evidence="3">
    <location>
        <begin position="109"/>
        <end position="117"/>
    </location>
    <ligand>
        <name>ATP</name>
        <dbReference type="ChEBI" id="CHEBI:30616"/>
    </ligand>
</feature>
<feature type="binding site" evidence="3">
    <location>
        <position position="132"/>
    </location>
    <ligand>
        <name>ATP</name>
        <dbReference type="ChEBI" id="CHEBI:30616"/>
    </ligand>
</feature>
<feature type="binding site" evidence="1">
    <location>
        <position position="231"/>
    </location>
    <ligand>
        <name>Mg(2+)</name>
        <dbReference type="ChEBI" id="CHEBI:18420"/>
        <label>1</label>
    </ligand>
</feature>
<feature type="binding site" evidence="1">
    <location>
        <position position="244"/>
    </location>
    <ligand>
        <name>Mg(2+)</name>
        <dbReference type="ChEBI" id="CHEBI:18420"/>
        <label>1</label>
    </ligand>
</feature>
<feature type="binding site" evidence="1">
    <location>
        <position position="246"/>
    </location>
    <ligand>
        <name>Mg(2+)</name>
        <dbReference type="ChEBI" id="CHEBI:18420"/>
        <label>2</label>
    </ligand>
</feature>
<feature type="modified residue" description="Phosphothreonine; by CDK1" evidence="7">
    <location>
        <position position="478"/>
    </location>
</feature>
<comment type="function">
    <text evidence="6 8">Acts as a negative regulator of entry into mitosis (G2 to M transition) by phosphorylation of the CDK1 kinase specifically when CDK1 is complexed to cyclins. Mediates phosphorylation of CDK1 predominantly on 'Thr-14' (PubMed:11959823, PubMed:7569953). Also involved in Golgi fragmentation (PubMed:7569953). May be involved in phosphorylation of CDK1 on 'Tyr-15' to a lesser degree, however tyrosine kinase activity is unclear and may be indirect (PubMed:7569953).</text>
</comment>
<comment type="catalytic activity">
    <reaction evidence="10">
        <text>L-seryl-[protein] + ATP = O-phospho-L-seryl-[protein] + ADP + H(+)</text>
        <dbReference type="Rhea" id="RHEA:17989"/>
        <dbReference type="Rhea" id="RHEA-COMP:9863"/>
        <dbReference type="Rhea" id="RHEA-COMP:11604"/>
        <dbReference type="ChEBI" id="CHEBI:15378"/>
        <dbReference type="ChEBI" id="CHEBI:29999"/>
        <dbReference type="ChEBI" id="CHEBI:30616"/>
        <dbReference type="ChEBI" id="CHEBI:83421"/>
        <dbReference type="ChEBI" id="CHEBI:456216"/>
        <dbReference type="EC" id="2.7.11.1"/>
    </reaction>
</comment>
<comment type="catalytic activity">
    <reaction evidence="8">
        <text>L-threonyl-[protein] + ATP = O-phospho-L-threonyl-[protein] + ADP + H(+)</text>
        <dbReference type="Rhea" id="RHEA:46608"/>
        <dbReference type="Rhea" id="RHEA-COMP:11060"/>
        <dbReference type="Rhea" id="RHEA-COMP:11605"/>
        <dbReference type="ChEBI" id="CHEBI:15378"/>
        <dbReference type="ChEBI" id="CHEBI:30013"/>
        <dbReference type="ChEBI" id="CHEBI:30616"/>
        <dbReference type="ChEBI" id="CHEBI:61977"/>
        <dbReference type="ChEBI" id="CHEBI:456216"/>
        <dbReference type="EC" id="2.7.11.1"/>
    </reaction>
</comment>
<comment type="activity regulation">
    <text evidence="9">Negatively regulated by hyperphosphorylation during mitosis. The plk1/plk1 protein kinase may be required for mitotic phosphorylation. Inactivated during oocyte maturation by phosphorylation by RSK2 and Mos kinase.</text>
</comment>
<comment type="subunit">
    <text evidence="2 6">Interacts with CDC2-CCNB1 complex (By similarity). Interacts with Mos during oocyte maturation (PubMed:11959823).</text>
</comment>
<comment type="subcellular location">
    <subcellularLocation>
        <location evidence="2">Endoplasmic reticulum membrane</location>
        <topology evidence="2">Peripheral membrane protein</topology>
    </subcellularLocation>
    <subcellularLocation>
        <location evidence="2">Golgi apparatus membrane</location>
        <topology evidence="2">Peripheral membrane protein</topology>
    </subcellularLocation>
</comment>
<comment type="domain">
    <text evidence="2">The membrane-association motif is essential for the localization to membrane of Golgi stack. According to some authors, it is a transmembrane domain; the existence of a transmembrane region is however unproven.</text>
</comment>
<comment type="PTM">
    <text evidence="7 9">Autophosphorylated. Phosphorylated on undefined residues by RSK2 and Mos kinases. Phosphorylation at Thr-478 by cdk1 creates a docking site for plk1/plx1, leading to subsequent phosphorylation by plk1/plk1 and inhibition of the protein kinase activity kinase activity.</text>
</comment>
<comment type="similarity">
    <text evidence="3">Belongs to the protein kinase superfamily. Ser/Thr protein kinase family. WEE1 subfamily.</text>
</comment>
<name>PMYT1_XENLA</name>
<accession>Q91618</accession>
<keyword id="KW-0067">ATP-binding</keyword>
<keyword id="KW-0131">Cell cycle</keyword>
<keyword id="KW-0256">Endoplasmic reticulum</keyword>
<keyword id="KW-0333">Golgi apparatus</keyword>
<keyword id="KW-0418">Kinase</keyword>
<keyword id="KW-0460">Magnesium</keyword>
<keyword id="KW-0472">Membrane</keyword>
<keyword id="KW-0479">Metal-binding</keyword>
<keyword id="KW-0547">Nucleotide-binding</keyword>
<keyword id="KW-0597">Phosphoprotein</keyword>
<keyword id="KW-1185">Reference proteome</keyword>
<keyword id="KW-0723">Serine/threonine-protein kinase</keyword>
<keyword id="KW-0808">Transferase</keyword>
<organism>
    <name type="scientific">Xenopus laevis</name>
    <name type="common">African clawed frog</name>
    <dbReference type="NCBI Taxonomy" id="8355"/>
    <lineage>
        <taxon>Eukaryota</taxon>
        <taxon>Metazoa</taxon>
        <taxon>Chordata</taxon>
        <taxon>Craniata</taxon>
        <taxon>Vertebrata</taxon>
        <taxon>Euteleostomi</taxon>
        <taxon>Amphibia</taxon>
        <taxon>Batrachia</taxon>
        <taxon>Anura</taxon>
        <taxon>Pipoidea</taxon>
        <taxon>Pipidae</taxon>
        <taxon>Xenopodinae</taxon>
        <taxon>Xenopus</taxon>
        <taxon>Xenopus</taxon>
    </lineage>
</organism>
<gene>
    <name type="primary">pkmyt1</name>
    <name type="synonym">myt1</name>
</gene>